<gene>
    <name type="primary">NAR1</name>
    <name type="ORF">SNOG_07139</name>
</gene>
<proteinExistence type="inferred from homology"/>
<comment type="function">
    <text evidence="1">Component of the cytosolic Fe/S protein assembly machinery. Required for maturation of extramitochondrial Fe/S proteins. May play a role in the transfer of pre-assembled Fe/S clusters to target apoproteins (By similarity).</text>
</comment>
<comment type="similarity">
    <text evidence="4">Belongs to the NARF family.</text>
</comment>
<reference key="1">
    <citation type="journal article" date="2007" name="Plant Cell">
        <title>Dothideomycete-plant interactions illuminated by genome sequencing and EST analysis of the wheat pathogen Stagonospora nodorum.</title>
        <authorList>
            <person name="Hane J.K."/>
            <person name="Lowe R.G.T."/>
            <person name="Solomon P.S."/>
            <person name="Tan K.-C."/>
            <person name="Schoch C.L."/>
            <person name="Spatafora J.W."/>
            <person name="Crous P.W."/>
            <person name="Kodira C.D."/>
            <person name="Birren B.W."/>
            <person name="Galagan J.E."/>
            <person name="Torriani S.F.F."/>
            <person name="McDonald B.A."/>
            <person name="Oliver R.P."/>
        </authorList>
    </citation>
    <scope>NUCLEOTIDE SEQUENCE [LARGE SCALE GENOMIC DNA]</scope>
    <source>
        <strain>SN15 / ATCC MYA-4574 / FGSC 10173</strain>
    </source>
</reference>
<name>NAR1_PHANO</name>
<keyword id="KW-0004">4Fe-4S</keyword>
<keyword id="KW-0408">Iron</keyword>
<keyword id="KW-0411">Iron-sulfur</keyword>
<keyword id="KW-0479">Metal-binding</keyword>
<accession>Q0UM75</accession>
<feature type="chain" id="PRO_0000383735" description="Cytosolic Fe-S cluster assembly factor NAR1">
    <location>
        <begin position="1"/>
        <end position="632"/>
    </location>
</feature>
<feature type="region of interest" description="Disordered" evidence="3">
    <location>
        <begin position="27"/>
        <end position="53"/>
    </location>
</feature>
<feature type="region of interest" description="Disordered" evidence="3">
    <location>
        <begin position="99"/>
        <end position="119"/>
    </location>
</feature>
<feature type="region of interest" description="Disordered" evidence="3">
    <location>
        <begin position="210"/>
        <end position="231"/>
    </location>
</feature>
<feature type="region of interest" description="Disordered" evidence="3">
    <location>
        <begin position="542"/>
        <end position="573"/>
    </location>
</feature>
<feature type="compositionally biased region" description="Low complexity" evidence="3">
    <location>
        <begin position="101"/>
        <end position="119"/>
    </location>
</feature>
<feature type="compositionally biased region" description="Polar residues" evidence="3">
    <location>
        <begin position="211"/>
        <end position="221"/>
    </location>
</feature>
<feature type="compositionally biased region" description="Acidic residues" evidence="3">
    <location>
        <begin position="544"/>
        <end position="554"/>
    </location>
</feature>
<feature type="compositionally biased region" description="Polar residues" evidence="3">
    <location>
        <begin position="555"/>
        <end position="567"/>
    </location>
</feature>
<feature type="binding site" evidence="2">
    <location>
        <position position="20"/>
    </location>
    <ligand>
        <name>[4Fe-4S] cluster</name>
        <dbReference type="ChEBI" id="CHEBI:49883"/>
        <label>1</label>
    </ligand>
</feature>
<feature type="binding site" evidence="2">
    <location>
        <position position="62"/>
    </location>
    <ligand>
        <name>[4Fe-4S] cluster</name>
        <dbReference type="ChEBI" id="CHEBI:49883"/>
        <label>1</label>
    </ligand>
</feature>
<feature type="binding site" evidence="2">
    <location>
        <position position="65"/>
    </location>
    <ligand>
        <name>[4Fe-4S] cluster</name>
        <dbReference type="ChEBI" id="CHEBI:49883"/>
        <label>1</label>
    </ligand>
</feature>
<feature type="binding site" evidence="2">
    <location>
        <position position="68"/>
    </location>
    <ligand>
        <name>[4Fe-4S] cluster</name>
        <dbReference type="ChEBI" id="CHEBI:49883"/>
        <label>1</label>
    </ligand>
</feature>
<feature type="binding site" evidence="2">
    <location>
        <position position="240"/>
    </location>
    <ligand>
        <name>[4Fe-4S] cluster</name>
        <dbReference type="ChEBI" id="CHEBI:49883"/>
        <label>2</label>
    </ligand>
</feature>
<feature type="binding site" evidence="2">
    <location>
        <position position="295"/>
    </location>
    <ligand>
        <name>[4Fe-4S] cluster</name>
        <dbReference type="ChEBI" id="CHEBI:49883"/>
        <label>2</label>
    </ligand>
</feature>
<feature type="binding site" evidence="2">
    <location>
        <position position="486"/>
    </location>
    <ligand>
        <name>[4Fe-4S] cluster</name>
        <dbReference type="ChEBI" id="CHEBI:49883"/>
        <label>2</label>
    </ligand>
</feature>
<feature type="binding site" evidence="2">
    <location>
        <position position="490"/>
    </location>
    <ligand>
        <name>[4Fe-4S] cluster</name>
        <dbReference type="ChEBI" id="CHEBI:49883"/>
        <label>2</label>
    </ligand>
</feature>
<dbReference type="EMBL" id="CH445334">
    <property type="protein sequence ID" value="EAT85790.1"/>
    <property type="molecule type" value="Genomic_DNA"/>
</dbReference>
<dbReference type="RefSeq" id="XP_001797492.1">
    <property type="nucleotide sequence ID" value="XM_001797440.1"/>
</dbReference>
<dbReference type="SMR" id="Q0UM75"/>
<dbReference type="FunCoup" id="Q0UM75">
    <property type="interactions" value="354"/>
</dbReference>
<dbReference type="STRING" id="321614.Q0UM75"/>
<dbReference type="EnsemblFungi" id="SNOT_07139">
    <property type="protein sequence ID" value="SNOT_07139"/>
    <property type="gene ID" value="SNOG_07139"/>
</dbReference>
<dbReference type="GeneID" id="5974382"/>
<dbReference type="KEGG" id="pno:SNOG_07139"/>
<dbReference type="VEuPathDB" id="FungiDB:JI435_071390"/>
<dbReference type="eggNOG" id="KOG2439">
    <property type="taxonomic scope" value="Eukaryota"/>
</dbReference>
<dbReference type="HOGENOM" id="CLU_018240_0_1_1"/>
<dbReference type="InParanoid" id="Q0UM75"/>
<dbReference type="OMA" id="GYLHHVL"/>
<dbReference type="OrthoDB" id="10253113at2759"/>
<dbReference type="Proteomes" id="UP000001055">
    <property type="component" value="Unassembled WGS sequence"/>
</dbReference>
<dbReference type="GO" id="GO:0097361">
    <property type="term" value="C:cytosolic [4Fe-4S] assembly targeting complex"/>
    <property type="evidence" value="ECO:0000318"/>
    <property type="project" value="GO_Central"/>
</dbReference>
<dbReference type="GO" id="GO:0051539">
    <property type="term" value="F:4 iron, 4 sulfur cluster binding"/>
    <property type="evidence" value="ECO:0007669"/>
    <property type="project" value="UniProtKB-KW"/>
</dbReference>
<dbReference type="GO" id="GO:0051536">
    <property type="term" value="F:iron-sulfur cluster binding"/>
    <property type="evidence" value="ECO:0000250"/>
    <property type="project" value="UniProtKB"/>
</dbReference>
<dbReference type="GO" id="GO:0046872">
    <property type="term" value="F:metal ion binding"/>
    <property type="evidence" value="ECO:0007669"/>
    <property type="project" value="UniProtKB-KW"/>
</dbReference>
<dbReference type="GO" id="GO:0016226">
    <property type="term" value="P:iron-sulfur cluster assembly"/>
    <property type="evidence" value="ECO:0000250"/>
    <property type="project" value="UniProtKB"/>
</dbReference>
<dbReference type="Gene3D" id="3.40.50.1780">
    <property type="match status" value="1"/>
</dbReference>
<dbReference type="Gene3D" id="3.40.950.10">
    <property type="entry name" value="Fe-only Hydrogenase (Larger Subunit), Chain L, domain 3"/>
    <property type="match status" value="1"/>
</dbReference>
<dbReference type="InterPro" id="IPR050340">
    <property type="entry name" value="Cytosolic_Fe-S_CAF"/>
</dbReference>
<dbReference type="InterPro" id="IPR009016">
    <property type="entry name" value="Fe_hydrogenase"/>
</dbReference>
<dbReference type="InterPro" id="IPR004108">
    <property type="entry name" value="Fe_hydrogenase_lsu_C"/>
</dbReference>
<dbReference type="PANTHER" id="PTHR11615">
    <property type="entry name" value="NITRATE, FORMATE, IRON DEHYDROGENASE"/>
    <property type="match status" value="1"/>
</dbReference>
<dbReference type="Pfam" id="PF02906">
    <property type="entry name" value="Fe_hyd_lg_C"/>
    <property type="match status" value="1"/>
</dbReference>
<dbReference type="SUPFAM" id="SSF53920">
    <property type="entry name" value="Fe-only hydrogenase"/>
    <property type="match status" value="1"/>
</dbReference>
<organism>
    <name type="scientific">Phaeosphaeria nodorum (strain SN15 / ATCC MYA-4574 / FGSC 10173)</name>
    <name type="common">Glume blotch fungus</name>
    <name type="synonym">Parastagonospora nodorum</name>
    <dbReference type="NCBI Taxonomy" id="321614"/>
    <lineage>
        <taxon>Eukaryota</taxon>
        <taxon>Fungi</taxon>
        <taxon>Dikarya</taxon>
        <taxon>Ascomycota</taxon>
        <taxon>Pezizomycotina</taxon>
        <taxon>Dothideomycetes</taxon>
        <taxon>Pleosporomycetidae</taxon>
        <taxon>Pleosporales</taxon>
        <taxon>Pleosporineae</taxon>
        <taxon>Phaeosphaeriaceae</taxon>
        <taxon>Parastagonospora</taxon>
    </lineage>
</organism>
<evidence type="ECO:0000250" key="1"/>
<evidence type="ECO:0000255" key="2"/>
<evidence type="ECO:0000256" key="3">
    <source>
        <dbReference type="SAM" id="MobiDB-lite"/>
    </source>
</evidence>
<evidence type="ECO:0000305" key="4"/>
<protein>
    <recommendedName>
        <fullName>Cytosolic Fe-S cluster assembly factor NAR1</fullName>
    </recommendedName>
    <alternativeName>
        <fullName>Nuclear architecture-related protein 1</fullName>
    </alternativeName>
</protein>
<sequence length="632" mass="67399">MSAILSADDLNDFISPGVACIKPIETLPAKPEDSSNPYEVTTEDKAAASQPPPPASISLTDCLACSGCVTSAEAVLVSLQSHSEVLTTLDTYRSLRAPWQTQNGTNGTNGTNGTTNGHSTNGTTTNGINGHSHEGKLFVASVSPQSRASIAAVFNVSEAEAGNMIAQLLSGPSGLKTGGHQGSDFTWVLDTNVVREACLVAAADEVANALSPETSNPSTKPGSEGAIDTTPKQPILTSACPGWICYAEKTHPYILPHLSRLKSPQALTGTLIKSVLSQQYNIPPSQIWHVAIMPCFDKKLEASRSELTSSAWLPNHDATQDPVRDVDCVITARELLHLASARGINFASLPRTPLSASERTPFPDPKLDAFLFPHTRRKNQDVVAGSSGGYLYHILQTYQAQNPGSSISVSRGRNADVVEYSLVRGSETIIRAARFYGFRNIQNLVRRLKPAKASRLPGGKTGVSRKPGAAAGGDVKDYAYVEVMACPGGCTNGGGQVKITEVEEVRAYEGVESTNGDTLAPKPGPKEQKEWLAKVDEAYFSGSDSEEEKVDQDGDQNMQDATTNGHTSEPDIVNGISRRKINDVVAHWSHLTGVDTQKLLYTSYRKVESDVGKKQSDMERVAGLAVTVGGGW</sequence>